<keyword id="KW-1185">Reference proteome</keyword>
<keyword id="KW-0677">Repeat</keyword>
<keyword id="KW-0804">Transcription</keyword>
<keyword id="KW-0805">Transcription regulation</keyword>
<keyword id="KW-0833">Ubl conjugation pathway</keyword>
<keyword id="KW-0853">WD repeat</keyword>
<comment type="function">
    <text evidence="1">Component of the SCF(sconB) E3 ubiquitin ligase complex involved in the regulation of sulfur metabolite repression, probably by mediating the inactivation or degradation of the metR transcription factor.</text>
</comment>
<comment type="pathway">
    <text>Protein modification; protein ubiquitination.</text>
</comment>
<comment type="subunit">
    <text evidence="1">Component of the SCF(sconB) E3 ubiquitin ligase complex.</text>
</comment>
<comment type="similarity">
    <text evidence="4">Belongs to the WD repeat MET30/SCONB/SCON-2 family.</text>
</comment>
<feature type="chain" id="PRO_0000397256" description="Probable E3 ubiquitin ligase complex SCF subunit sconB">
    <location>
        <begin position="1"/>
        <end position="667"/>
    </location>
</feature>
<feature type="domain" description="F-box" evidence="2">
    <location>
        <begin position="182"/>
        <end position="228"/>
    </location>
</feature>
<feature type="repeat" description="WD 1">
    <location>
        <begin position="347"/>
        <end position="386"/>
    </location>
</feature>
<feature type="repeat" description="WD 2">
    <location>
        <begin position="388"/>
        <end position="426"/>
    </location>
</feature>
<feature type="repeat" description="WD 3">
    <location>
        <begin position="428"/>
        <end position="464"/>
    </location>
</feature>
<feature type="repeat" description="WD 4">
    <location>
        <begin position="466"/>
        <end position="507"/>
    </location>
</feature>
<feature type="repeat" description="WD 5">
    <location>
        <begin position="549"/>
        <end position="593"/>
    </location>
</feature>
<feature type="repeat" description="WD 6">
    <location>
        <begin position="594"/>
        <end position="633"/>
    </location>
</feature>
<feature type="repeat" description="WD 7">
    <location>
        <begin position="636"/>
        <end position="667"/>
    </location>
</feature>
<feature type="region of interest" description="Disordered" evidence="3">
    <location>
        <begin position="1"/>
        <end position="55"/>
    </location>
</feature>
<feature type="region of interest" description="Disordered" evidence="3">
    <location>
        <begin position="528"/>
        <end position="562"/>
    </location>
</feature>
<organism>
    <name type="scientific">Talaromyces stipitatus (strain ATCC 10500 / CBS 375.48 / QM 6759 / NRRL 1006)</name>
    <name type="common">Penicillium stipitatum</name>
    <dbReference type="NCBI Taxonomy" id="441959"/>
    <lineage>
        <taxon>Eukaryota</taxon>
        <taxon>Fungi</taxon>
        <taxon>Dikarya</taxon>
        <taxon>Ascomycota</taxon>
        <taxon>Pezizomycotina</taxon>
        <taxon>Eurotiomycetes</taxon>
        <taxon>Eurotiomycetidae</taxon>
        <taxon>Eurotiales</taxon>
        <taxon>Trichocomaceae</taxon>
        <taxon>Talaromyces</taxon>
        <taxon>Talaromyces sect. Talaromyces</taxon>
    </lineage>
</organism>
<proteinExistence type="inferred from homology"/>
<reference key="1">
    <citation type="journal article" date="2015" name="Genome Announc.">
        <title>Genome sequence of the AIDS-associated pathogen Penicillium marneffei (ATCC18224) and its near taxonomic relative Talaromyces stipitatus (ATCC10500).</title>
        <authorList>
            <person name="Nierman W.C."/>
            <person name="Fedorova-Abrams N.D."/>
            <person name="Andrianopoulos A."/>
        </authorList>
    </citation>
    <scope>NUCLEOTIDE SEQUENCE [LARGE SCALE GENOMIC DNA]</scope>
    <source>
        <strain>ATCC 10500 / CBS 375.48 / QM 6759 / NRRL 1006</strain>
    </source>
</reference>
<accession>B8M7Q5</accession>
<gene>
    <name type="primary">sconB</name>
    <name type="ORF">TSTA_030500</name>
</gene>
<sequence>MNGSGSTAKESLFNPTPRKLGLPEDNTMTPYNGVRSIFDNSSGSRQLTDEHTNQERAISKAKLADENIAPFLAKHIPSQYAPLGADASKTTGPPRPMNSRYCYRHRPDLKCRRQADEPSMDHLQWELQSLSQSDQQGIAHVWSLFSAAPAKQRELMLRGILAQCCFPQLSLISSSVRDLIRIDFITALPPEISFKILSYLDTASLCRAAQVSRAWKCLADDDVVWHRMCEQHIHRKCTKCGWGLPLLERKRLRASKEQIEKRALGVSVAPDSSTIAVQTVDATSGVKRTAEDLEGSDSQVVKRQRLPTEDTELHRTNVRPWKDVYKDRFKVGTNWKYGRCSVKVFKGHTNGVMCLQFEDNILATGSYDMTIKIWDMETGEELRTLTGHTSGIRCLQFDDTKLISGSIDRTLKVWNWRTGECISTYTGHLGGIIGLHFENSVLASGSIDNTVKIWNFEDKSTFLLRGHSDWVNAVRVDSASRTVLSASDDCTVKLWDLDSKQCIRTFQGHVGQVQQVIPLPKEFEFEEDHDAGHEEDSNASVSGDESPLRQEPCSPGASFFEGDRPAPPRYILTSALDSTIRLWETYSGRCLRTFFGHLEGVWALSADTLRIVSGAEDRMVKIWDPRTGKCERTFTGHSGPVTCVGLGDSCFVTGSEDCEVRIHSFKN</sequence>
<protein>
    <recommendedName>
        <fullName>Probable E3 ubiquitin ligase complex SCF subunit sconB</fullName>
    </recommendedName>
    <alternativeName>
        <fullName>Sulfur controller B</fullName>
    </alternativeName>
    <alternativeName>
        <fullName>Sulfur metabolite repression control protein B</fullName>
    </alternativeName>
</protein>
<dbReference type="EMBL" id="EQ962654">
    <property type="protein sequence ID" value="EED19784.1"/>
    <property type="molecule type" value="Genomic_DNA"/>
</dbReference>
<dbReference type="RefSeq" id="XP_002480218.1">
    <property type="nucleotide sequence ID" value="XM_002480173.1"/>
</dbReference>
<dbReference type="SMR" id="B8M7Q5"/>
<dbReference type="FunCoup" id="B8M7Q5">
    <property type="interactions" value="174"/>
</dbReference>
<dbReference type="STRING" id="441959.B8M7Q5"/>
<dbReference type="GeneID" id="8101729"/>
<dbReference type="VEuPathDB" id="FungiDB:TSTA_030500"/>
<dbReference type="eggNOG" id="KOG0274">
    <property type="taxonomic scope" value="Eukaryota"/>
</dbReference>
<dbReference type="HOGENOM" id="CLU_000288_103_1_1"/>
<dbReference type="InParanoid" id="B8M7Q5"/>
<dbReference type="OMA" id="GIAHVWS"/>
<dbReference type="OrthoDB" id="5580488at2759"/>
<dbReference type="PhylomeDB" id="B8M7Q5"/>
<dbReference type="UniPathway" id="UPA00143"/>
<dbReference type="Proteomes" id="UP000001745">
    <property type="component" value="Unassembled WGS sequence"/>
</dbReference>
<dbReference type="GO" id="GO:0016567">
    <property type="term" value="P:protein ubiquitination"/>
    <property type="evidence" value="ECO:0007669"/>
    <property type="project" value="UniProtKB-UniPathway"/>
</dbReference>
<dbReference type="CDD" id="cd22147">
    <property type="entry name" value="F-box_SpPof1-like"/>
    <property type="match status" value="1"/>
</dbReference>
<dbReference type="CDD" id="cd00200">
    <property type="entry name" value="WD40"/>
    <property type="match status" value="1"/>
</dbReference>
<dbReference type="FunFam" id="1.20.1280.50:FF:000016">
    <property type="entry name" value="E3 ubiquitin ligase complex SCF subunit sconB"/>
    <property type="match status" value="1"/>
</dbReference>
<dbReference type="FunFam" id="2.130.10.10:FF:000770">
    <property type="entry name" value="E3 ubiquitin ligase complex SCF subunit sconB"/>
    <property type="match status" value="1"/>
</dbReference>
<dbReference type="Gene3D" id="1.20.1280.50">
    <property type="match status" value="1"/>
</dbReference>
<dbReference type="Gene3D" id="2.130.10.10">
    <property type="entry name" value="YVTN repeat-like/Quinoprotein amine dehydrogenase"/>
    <property type="match status" value="3"/>
</dbReference>
<dbReference type="InterPro" id="IPR036047">
    <property type="entry name" value="F-box-like_dom_sf"/>
</dbReference>
<dbReference type="InterPro" id="IPR001810">
    <property type="entry name" value="F-box_dom"/>
</dbReference>
<dbReference type="InterPro" id="IPR020472">
    <property type="entry name" value="G-protein_beta_WD-40_rep"/>
</dbReference>
<dbReference type="InterPro" id="IPR051075">
    <property type="entry name" value="SCF_subunit_WD-repeat"/>
</dbReference>
<dbReference type="InterPro" id="IPR015943">
    <property type="entry name" value="WD40/YVTN_repeat-like_dom_sf"/>
</dbReference>
<dbReference type="InterPro" id="IPR019775">
    <property type="entry name" value="WD40_repeat_CS"/>
</dbReference>
<dbReference type="InterPro" id="IPR036322">
    <property type="entry name" value="WD40_repeat_dom_sf"/>
</dbReference>
<dbReference type="InterPro" id="IPR001680">
    <property type="entry name" value="WD40_rpt"/>
</dbReference>
<dbReference type="PANTHER" id="PTHR19872">
    <property type="entry name" value="UBIQUITIN LIGASE SPECIFICITY FACTOR/HREP PROTEIN"/>
    <property type="match status" value="1"/>
</dbReference>
<dbReference type="PANTHER" id="PTHR19872:SF9">
    <property type="entry name" value="UBIQUITIN-BINDING SDF UBIQUITIN LIGASE COMPLEX SUBUNIT"/>
    <property type="match status" value="1"/>
</dbReference>
<dbReference type="Pfam" id="PF12937">
    <property type="entry name" value="F-box-like"/>
    <property type="match status" value="1"/>
</dbReference>
<dbReference type="Pfam" id="PF00400">
    <property type="entry name" value="WD40"/>
    <property type="match status" value="6"/>
</dbReference>
<dbReference type="PRINTS" id="PR00320">
    <property type="entry name" value="GPROTEINBRPT"/>
</dbReference>
<dbReference type="SMART" id="SM00256">
    <property type="entry name" value="FBOX"/>
    <property type="match status" value="1"/>
</dbReference>
<dbReference type="SMART" id="SM00320">
    <property type="entry name" value="WD40"/>
    <property type="match status" value="7"/>
</dbReference>
<dbReference type="SUPFAM" id="SSF81383">
    <property type="entry name" value="F-box domain"/>
    <property type="match status" value="1"/>
</dbReference>
<dbReference type="SUPFAM" id="SSF50978">
    <property type="entry name" value="WD40 repeat-like"/>
    <property type="match status" value="1"/>
</dbReference>
<dbReference type="PROSITE" id="PS50181">
    <property type="entry name" value="FBOX"/>
    <property type="match status" value="1"/>
</dbReference>
<dbReference type="PROSITE" id="PS00678">
    <property type="entry name" value="WD_REPEATS_1"/>
    <property type="match status" value="4"/>
</dbReference>
<dbReference type="PROSITE" id="PS50082">
    <property type="entry name" value="WD_REPEATS_2"/>
    <property type="match status" value="6"/>
</dbReference>
<dbReference type="PROSITE" id="PS50294">
    <property type="entry name" value="WD_REPEATS_REGION"/>
    <property type="match status" value="1"/>
</dbReference>
<name>SCONB_TALSN</name>
<evidence type="ECO:0000250" key="1"/>
<evidence type="ECO:0000255" key="2">
    <source>
        <dbReference type="PROSITE-ProRule" id="PRU00080"/>
    </source>
</evidence>
<evidence type="ECO:0000256" key="3">
    <source>
        <dbReference type="SAM" id="MobiDB-lite"/>
    </source>
</evidence>
<evidence type="ECO:0000305" key="4"/>